<dbReference type="EMBL" id="AB089183">
    <property type="protein sequence ID" value="BAC10633.1"/>
    <property type="molecule type" value="mRNA"/>
</dbReference>
<dbReference type="EMBL" id="AF384173">
    <property type="protein sequence ID" value="AAQ02795.1"/>
    <property type="molecule type" value="mRNA"/>
</dbReference>
<dbReference type="EMBL" id="AF384174">
    <property type="protein sequence ID" value="AAQ02796.1"/>
    <property type="molecule type" value="Genomic_DNA"/>
</dbReference>
<dbReference type="EMBL" id="AY552529">
    <property type="protein sequence ID" value="AAT57924.1"/>
    <property type="molecule type" value="mRNA"/>
</dbReference>
<dbReference type="EMBL" id="AK020333">
    <property type="protein sequence ID" value="BAC25623.1"/>
    <property type="molecule type" value="mRNA"/>
</dbReference>
<dbReference type="CCDS" id="CCDS40252.1">
    <molecule id="Q8K4N2-2"/>
</dbReference>
<dbReference type="RefSeq" id="NP_694755.1">
    <molecule id="Q8K4N2-2"/>
    <property type="nucleotide sequence ID" value="NM_153115.1"/>
</dbReference>
<dbReference type="RefSeq" id="XP_006508990.1">
    <molecule id="Q8K4N2-2"/>
    <property type="nucleotide sequence ID" value="XM_006508927.3"/>
</dbReference>
<dbReference type="FunCoup" id="Q8K4N2">
    <property type="interactions" value="13"/>
</dbReference>
<dbReference type="STRING" id="10090.ENSMUSP00000148411"/>
<dbReference type="PaxDb" id="10090-ENSMUSP00000055391"/>
<dbReference type="ProteomicsDB" id="257310">
    <molecule id="Q8K4N2-1"/>
</dbReference>
<dbReference type="ProteomicsDB" id="257311">
    <molecule id="Q8K4N2-2"/>
</dbReference>
<dbReference type="DNASU" id="78128"/>
<dbReference type="Ensembl" id="ENSMUST00000058955.5">
    <molecule id="Q8K4N2-2"/>
    <property type="protein sequence ID" value="ENSMUSP00000055391.4"/>
    <property type="gene ID" value="ENSMUSG00000079842.2"/>
</dbReference>
<dbReference type="Ensembl" id="ENSMUST00000212226.2">
    <molecule id="Q8K4N2-1"/>
    <property type="protein sequence ID" value="ENSMUSP00000148411.2"/>
    <property type="gene ID" value="ENSMUSG00000110641.2"/>
</dbReference>
<dbReference type="GeneID" id="78128"/>
<dbReference type="KEGG" id="mmu:78128"/>
<dbReference type="AGR" id="MGI:1925378"/>
<dbReference type="CTD" id="653423"/>
<dbReference type="MGI" id="MGI:1925378">
    <property type="gene designation" value="Spag11a"/>
</dbReference>
<dbReference type="VEuPathDB" id="HostDB:ENSMUSG00000059463"/>
<dbReference type="VEuPathDB" id="HostDB:ENSMUSG00000079842"/>
<dbReference type="VEuPathDB" id="HostDB:ENSMUSG00000110641"/>
<dbReference type="eggNOG" id="ENOG502TDV1">
    <property type="taxonomic scope" value="Eukaryota"/>
</dbReference>
<dbReference type="GeneTree" id="ENSGT00940000161432"/>
<dbReference type="HOGENOM" id="CLU_143879_1_0_1"/>
<dbReference type="InParanoid" id="Q8K4N2"/>
<dbReference type="OrthoDB" id="9828952at2759"/>
<dbReference type="TreeFam" id="TF338214"/>
<dbReference type="BioGRID-ORCS" id="546038">
    <property type="hits" value="3 hits in 77 CRISPR screens"/>
</dbReference>
<dbReference type="BioGRID-ORCS" id="78128">
    <property type="hits" value="2 hits in 74 CRISPR screens"/>
</dbReference>
<dbReference type="PRO" id="PR:Q8K4N2"/>
<dbReference type="Proteomes" id="UP000000589">
    <property type="component" value="Chromosome 8"/>
</dbReference>
<dbReference type="RNAct" id="Q8K4N2">
    <property type="molecule type" value="protein"/>
</dbReference>
<dbReference type="Bgee" id="ENSMUSG00000059463">
    <property type="expression patterns" value="Expressed in esophagus and 10 other cell types or tissues"/>
</dbReference>
<dbReference type="ExpressionAtlas" id="Q8K4N2">
    <property type="expression patterns" value="baseline and differential"/>
</dbReference>
<dbReference type="GO" id="GO:0001669">
    <property type="term" value="C:acrosomal vesicle"/>
    <property type="evidence" value="ECO:0000266"/>
    <property type="project" value="MGI"/>
</dbReference>
<dbReference type="GO" id="GO:0009986">
    <property type="term" value="C:cell surface"/>
    <property type="evidence" value="ECO:0000314"/>
    <property type="project" value="MGI"/>
</dbReference>
<dbReference type="GO" id="GO:0005615">
    <property type="term" value="C:extracellular space"/>
    <property type="evidence" value="ECO:0000314"/>
    <property type="project" value="MGI"/>
</dbReference>
<dbReference type="GO" id="GO:0019731">
    <property type="term" value="P:antibacterial humoral response"/>
    <property type="evidence" value="ECO:0000314"/>
    <property type="project" value="MGI"/>
</dbReference>
<dbReference type="GO" id="GO:0019732">
    <property type="term" value="P:antifungal humoral response"/>
    <property type="evidence" value="ECO:0000314"/>
    <property type="project" value="MGI"/>
</dbReference>
<dbReference type="GO" id="GO:0042742">
    <property type="term" value="P:defense response to bacterium"/>
    <property type="evidence" value="ECO:0000266"/>
    <property type="project" value="MGI"/>
</dbReference>
<dbReference type="GO" id="GO:0032690">
    <property type="term" value="P:negative regulation of interleukin-1 alpha production"/>
    <property type="evidence" value="ECO:0000314"/>
    <property type="project" value="MGI"/>
</dbReference>
<dbReference type="GO" id="GO:0032691">
    <property type="term" value="P:negative regulation of interleukin-1 beta production"/>
    <property type="evidence" value="ECO:0000314"/>
    <property type="project" value="MGI"/>
</dbReference>
<dbReference type="InterPro" id="IPR001855">
    <property type="entry name" value="Defensin_beta-like"/>
</dbReference>
<dbReference type="InterPro" id="IPR007988">
    <property type="entry name" value="Sperm_Ag_11A_B"/>
</dbReference>
<dbReference type="PANTHER" id="PTHR14081:SF3">
    <property type="entry name" value="SPERM-ASSOCIATED ANTIGEN 11A"/>
    <property type="match status" value="1"/>
</dbReference>
<dbReference type="PANTHER" id="PTHR14081">
    <property type="entry name" value="SPERM-ASSOCIATED ANTIGEN 11A-RELATED-RELATED"/>
    <property type="match status" value="1"/>
</dbReference>
<dbReference type="Pfam" id="PF00711">
    <property type="entry name" value="Defensin_beta"/>
    <property type="match status" value="1"/>
</dbReference>
<dbReference type="SUPFAM" id="SSF57392">
    <property type="entry name" value="Defensin-like"/>
    <property type="match status" value="1"/>
</dbReference>
<name>SG11A_MOUSE</name>
<protein>
    <recommendedName>
        <fullName evidence="9">Sperm-associated antigen 11A</fullName>
    </recommendedName>
    <alternativeName>
        <fullName evidence="3">Antimicrobial-like protein Bin-1b</fullName>
    </alternativeName>
    <alternativeName>
        <fullName evidence="2">EP2 protein</fullName>
    </alternativeName>
</protein>
<evidence type="ECO:0000250" key="1"/>
<evidence type="ECO:0000250" key="2">
    <source>
        <dbReference type="UniProtKB" id="Q6PDA7"/>
    </source>
</evidence>
<evidence type="ECO:0000250" key="3">
    <source>
        <dbReference type="UniProtKB" id="Q8VBV2"/>
    </source>
</evidence>
<evidence type="ECO:0000255" key="4"/>
<evidence type="ECO:0000303" key="5">
    <source>
    </source>
</evidence>
<evidence type="ECO:0000303" key="6">
    <source>
    </source>
</evidence>
<evidence type="ECO:0000303" key="7">
    <source ref="2"/>
</evidence>
<evidence type="ECO:0000305" key="8"/>
<evidence type="ECO:0000312" key="9">
    <source>
        <dbReference type="MGI" id="MGI:1925378"/>
    </source>
</evidence>
<gene>
    <name evidence="9" type="primary">Spag11a</name>
    <name evidence="7" type="synonym">Bin1b</name>
    <name evidence="2" type="synonym">Ep2</name>
    <name evidence="9" type="synonym">Ep2e</name>
    <name evidence="9" type="synonym">Spag11</name>
</gene>
<comment type="function">
    <text evidence="3">Has antimicrobial activity against E.coli (By similarity). Plays a role in the defense response in the male reproductive tract, contributing to sperm maturation, storage and protection (By similarity).</text>
</comment>
<comment type="subcellular location">
    <subcellularLocation>
        <location evidence="8">Secreted</location>
    </subcellularLocation>
</comment>
<comment type="alternative products">
    <event type="alternative splicing"/>
    <isoform>
        <id>Q8K4N2-1</id>
        <name>1</name>
        <name>Ep2q</name>
        <sequence type="displayed"/>
    </isoform>
    <isoform>
        <id>Q8K4N2-2</id>
        <name>2</name>
        <sequence type="described" ref="VSP_020138"/>
    </isoform>
</comment>
<comment type="similarity">
    <text evidence="8">Belongs to the beta-defensin family.</text>
</comment>
<reference key="1">
    <citation type="journal article" date="2002" name="J. Immunol.">
        <title>Identification of multiple novel epididymis-specific beta-defensin isoforms in humans and mice.</title>
        <authorList>
            <person name="Yamaguchi Y."/>
            <person name="Nagase T."/>
            <person name="Makita R."/>
            <person name="Fukuhara S."/>
            <person name="Tomita T."/>
            <person name="Tominaga T."/>
            <person name="Kurihara H."/>
            <person name="Ouchi Y."/>
        </authorList>
    </citation>
    <scope>NUCLEOTIDE SEQUENCE [MRNA] (ISOFORM 2)</scope>
    <source>
        <tissue>Epididymis</tissue>
    </source>
</reference>
<reference key="2">
    <citation type="submission" date="2001-05" db="EMBL/GenBank/DDBJ databases">
        <title>Identification of rat Bin1b homolog in mouse.</title>
        <authorList>
            <person name="Xiao L.-Q."/>
            <person name="Li P."/>
            <person name="Liu Q."/>
            <person name="Zhang Y.-D."/>
            <person name="Zhang Y.-L."/>
        </authorList>
    </citation>
    <scope>NUCLEOTIDE SEQUENCE [GENOMIC DNA / MRNA] (ISOFORM 2)</scope>
    <source>
        <strain>CD-1</strain>
        <tissue>Epididymis</tissue>
    </source>
</reference>
<reference key="3">
    <citation type="submission" date="2004-02" db="EMBL/GenBank/DDBJ databases">
        <title>Identification of novel beta-defensin isoforms in mice.</title>
        <authorList>
            <person name="Yashwanth R."/>
            <person name="Yenugu S."/>
            <person name="Hamil K.G."/>
            <person name="French F.S."/>
            <person name="Hall S.H."/>
        </authorList>
    </citation>
    <scope>NUCLEOTIDE SEQUENCE [MRNA] (ISOFORM 1)</scope>
    <source>
        <tissue>Epididymis</tissue>
    </source>
</reference>
<reference key="4">
    <citation type="journal article" date="2005" name="Science">
        <title>The transcriptional landscape of the mammalian genome.</title>
        <authorList>
            <person name="Carninci P."/>
            <person name="Kasukawa T."/>
            <person name="Katayama S."/>
            <person name="Gough J."/>
            <person name="Frith M.C."/>
            <person name="Maeda N."/>
            <person name="Oyama R."/>
            <person name="Ravasi T."/>
            <person name="Lenhard B."/>
            <person name="Wells C."/>
            <person name="Kodzius R."/>
            <person name="Shimokawa K."/>
            <person name="Bajic V.B."/>
            <person name="Brenner S.E."/>
            <person name="Batalov S."/>
            <person name="Forrest A.R."/>
            <person name="Zavolan M."/>
            <person name="Davis M.J."/>
            <person name="Wilming L.G."/>
            <person name="Aidinis V."/>
            <person name="Allen J.E."/>
            <person name="Ambesi-Impiombato A."/>
            <person name="Apweiler R."/>
            <person name="Aturaliya R.N."/>
            <person name="Bailey T.L."/>
            <person name="Bansal M."/>
            <person name="Baxter L."/>
            <person name="Beisel K.W."/>
            <person name="Bersano T."/>
            <person name="Bono H."/>
            <person name="Chalk A.M."/>
            <person name="Chiu K.P."/>
            <person name="Choudhary V."/>
            <person name="Christoffels A."/>
            <person name="Clutterbuck D.R."/>
            <person name="Crowe M.L."/>
            <person name="Dalla E."/>
            <person name="Dalrymple B.P."/>
            <person name="de Bono B."/>
            <person name="Della Gatta G."/>
            <person name="di Bernardo D."/>
            <person name="Down T."/>
            <person name="Engstrom P."/>
            <person name="Fagiolini M."/>
            <person name="Faulkner G."/>
            <person name="Fletcher C.F."/>
            <person name="Fukushima T."/>
            <person name="Furuno M."/>
            <person name="Futaki S."/>
            <person name="Gariboldi M."/>
            <person name="Georgii-Hemming P."/>
            <person name="Gingeras T.R."/>
            <person name="Gojobori T."/>
            <person name="Green R.E."/>
            <person name="Gustincich S."/>
            <person name="Harbers M."/>
            <person name="Hayashi Y."/>
            <person name="Hensch T.K."/>
            <person name="Hirokawa N."/>
            <person name="Hill D."/>
            <person name="Huminiecki L."/>
            <person name="Iacono M."/>
            <person name="Ikeo K."/>
            <person name="Iwama A."/>
            <person name="Ishikawa T."/>
            <person name="Jakt M."/>
            <person name="Kanapin A."/>
            <person name="Katoh M."/>
            <person name="Kawasawa Y."/>
            <person name="Kelso J."/>
            <person name="Kitamura H."/>
            <person name="Kitano H."/>
            <person name="Kollias G."/>
            <person name="Krishnan S.P."/>
            <person name="Kruger A."/>
            <person name="Kummerfeld S.K."/>
            <person name="Kurochkin I.V."/>
            <person name="Lareau L.F."/>
            <person name="Lazarevic D."/>
            <person name="Lipovich L."/>
            <person name="Liu J."/>
            <person name="Liuni S."/>
            <person name="McWilliam S."/>
            <person name="Madan Babu M."/>
            <person name="Madera M."/>
            <person name="Marchionni L."/>
            <person name="Matsuda H."/>
            <person name="Matsuzawa S."/>
            <person name="Miki H."/>
            <person name="Mignone F."/>
            <person name="Miyake S."/>
            <person name="Morris K."/>
            <person name="Mottagui-Tabar S."/>
            <person name="Mulder N."/>
            <person name="Nakano N."/>
            <person name="Nakauchi H."/>
            <person name="Ng P."/>
            <person name="Nilsson R."/>
            <person name="Nishiguchi S."/>
            <person name="Nishikawa S."/>
            <person name="Nori F."/>
            <person name="Ohara O."/>
            <person name="Okazaki Y."/>
            <person name="Orlando V."/>
            <person name="Pang K.C."/>
            <person name="Pavan W.J."/>
            <person name="Pavesi G."/>
            <person name="Pesole G."/>
            <person name="Petrovsky N."/>
            <person name="Piazza S."/>
            <person name="Reed J."/>
            <person name="Reid J.F."/>
            <person name="Ring B.Z."/>
            <person name="Ringwald M."/>
            <person name="Rost B."/>
            <person name="Ruan Y."/>
            <person name="Salzberg S.L."/>
            <person name="Sandelin A."/>
            <person name="Schneider C."/>
            <person name="Schoenbach C."/>
            <person name="Sekiguchi K."/>
            <person name="Semple C.A."/>
            <person name="Seno S."/>
            <person name="Sessa L."/>
            <person name="Sheng Y."/>
            <person name="Shibata Y."/>
            <person name="Shimada H."/>
            <person name="Shimada K."/>
            <person name="Silva D."/>
            <person name="Sinclair B."/>
            <person name="Sperling S."/>
            <person name="Stupka E."/>
            <person name="Sugiura K."/>
            <person name="Sultana R."/>
            <person name="Takenaka Y."/>
            <person name="Taki K."/>
            <person name="Tammoja K."/>
            <person name="Tan S.L."/>
            <person name="Tang S."/>
            <person name="Taylor M.S."/>
            <person name="Tegner J."/>
            <person name="Teichmann S.A."/>
            <person name="Ueda H.R."/>
            <person name="van Nimwegen E."/>
            <person name="Verardo R."/>
            <person name="Wei C.L."/>
            <person name="Yagi K."/>
            <person name="Yamanishi H."/>
            <person name="Zabarovsky E."/>
            <person name="Zhu S."/>
            <person name="Zimmer A."/>
            <person name="Hide W."/>
            <person name="Bult C."/>
            <person name="Grimmond S.M."/>
            <person name="Teasdale R.D."/>
            <person name="Liu E.T."/>
            <person name="Brusic V."/>
            <person name="Quackenbush J."/>
            <person name="Wahlestedt C."/>
            <person name="Mattick J.S."/>
            <person name="Hume D.A."/>
            <person name="Kai C."/>
            <person name="Sasaki D."/>
            <person name="Tomaru Y."/>
            <person name="Fukuda S."/>
            <person name="Kanamori-Katayama M."/>
            <person name="Suzuki M."/>
            <person name="Aoki J."/>
            <person name="Arakawa T."/>
            <person name="Iida J."/>
            <person name="Imamura K."/>
            <person name="Itoh M."/>
            <person name="Kato T."/>
            <person name="Kawaji H."/>
            <person name="Kawagashira N."/>
            <person name="Kawashima T."/>
            <person name="Kojima M."/>
            <person name="Kondo S."/>
            <person name="Konno H."/>
            <person name="Nakano K."/>
            <person name="Ninomiya N."/>
            <person name="Nishio T."/>
            <person name="Okada M."/>
            <person name="Plessy C."/>
            <person name="Shibata K."/>
            <person name="Shiraki T."/>
            <person name="Suzuki S."/>
            <person name="Tagami M."/>
            <person name="Waki K."/>
            <person name="Watahiki A."/>
            <person name="Okamura-Oho Y."/>
            <person name="Suzuki H."/>
            <person name="Kawai J."/>
            <person name="Hayashizaki Y."/>
        </authorList>
    </citation>
    <scope>NUCLEOTIDE SEQUENCE [LARGE SCALE MRNA] (ISOFORM 2)</scope>
    <source>
        <strain>C57BL/6J</strain>
        <tissue>Epididymis</tissue>
    </source>
</reference>
<keyword id="KW-0025">Alternative splicing</keyword>
<keyword id="KW-0044">Antibiotic</keyword>
<keyword id="KW-0929">Antimicrobial</keyword>
<keyword id="KW-0211">Defensin</keyword>
<keyword id="KW-1015">Disulfide bond</keyword>
<keyword id="KW-1185">Reference proteome</keyword>
<keyword id="KW-0964">Secreted</keyword>
<keyword id="KW-0732">Signal</keyword>
<accession>Q8K4N2</accession>
<accession>Q2HPE4</accession>
<accession>Q30KM3</accession>
<organism>
    <name type="scientific">Mus musculus</name>
    <name type="common">Mouse</name>
    <dbReference type="NCBI Taxonomy" id="10090"/>
    <lineage>
        <taxon>Eukaryota</taxon>
        <taxon>Metazoa</taxon>
        <taxon>Chordata</taxon>
        <taxon>Craniata</taxon>
        <taxon>Vertebrata</taxon>
        <taxon>Euteleostomi</taxon>
        <taxon>Mammalia</taxon>
        <taxon>Eutheria</taxon>
        <taxon>Euarchontoglires</taxon>
        <taxon>Glires</taxon>
        <taxon>Rodentia</taxon>
        <taxon>Myomorpha</taxon>
        <taxon>Muroidea</taxon>
        <taxon>Muridae</taxon>
        <taxon>Murinae</taxon>
        <taxon>Mus</taxon>
        <taxon>Mus</taxon>
    </lineage>
</organism>
<feature type="signal peptide" evidence="4">
    <location>
        <begin position="1"/>
        <end position="19"/>
    </location>
</feature>
<feature type="chain" id="PRO_0000006955" description="Sperm-associated antigen 11A">
    <location>
        <begin position="20"/>
        <end position="71"/>
    </location>
</feature>
<feature type="disulfide bond" evidence="1">
    <location>
        <begin position="32"/>
        <end position="61"/>
    </location>
</feature>
<feature type="disulfide bond" evidence="1">
    <location>
        <begin position="39"/>
        <end position="54"/>
    </location>
</feature>
<feature type="disulfide bond" evidence="1">
    <location>
        <begin position="44"/>
        <end position="62"/>
    </location>
</feature>
<feature type="splice variant" id="VSP_020138" description="In isoform 2." evidence="5 6 7">
    <original>MIPRLLPFFASLLFAALLFP</original>
    <variation>MKVLLLFAVFFCFVQGNS</variation>
    <location>
        <begin position="1"/>
        <end position="20"/>
    </location>
</feature>
<feature type="sequence conflict" description="In Ref. 3; AAT57924." evidence="8" ref="3">
    <original>A</original>
    <variation>V</variation>
    <location>
        <position position="10"/>
    </location>
</feature>
<proteinExistence type="inferred from homology"/>
<sequence>MIPRLLPFFASLLFAALLFPGDIPPGIRNTVCLMQQGHCRLFMCRSGERKGDICSDPWNRCCVPYSVKDRR</sequence>